<protein>
    <recommendedName>
        <fullName evidence="1">ATP synthase subunit delta</fullName>
    </recommendedName>
    <alternativeName>
        <fullName evidence="1">ATP synthase F(1) sector subunit delta</fullName>
    </alternativeName>
    <alternativeName>
        <fullName evidence="1">F-type ATPase subunit delta</fullName>
        <shortName evidence="1">F-ATPase subunit delta</shortName>
    </alternativeName>
</protein>
<proteinExistence type="inferred from homology"/>
<reference key="1">
    <citation type="journal article" date="2005" name="Genome Res.">
        <title>Comparative and functional genomic analyses of the pathogenicity of phytopathogen Xanthomonas campestris pv. campestris.</title>
        <authorList>
            <person name="Qian W."/>
            <person name="Jia Y."/>
            <person name="Ren S.-X."/>
            <person name="He Y.-Q."/>
            <person name="Feng J.-X."/>
            <person name="Lu L.-F."/>
            <person name="Sun Q."/>
            <person name="Ying G."/>
            <person name="Tang D.-J."/>
            <person name="Tang H."/>
            <person name="Wu W."/>
            <person name="Hao P."/>
            <person name="Wang L."/>
            <person name="Jiang B.-L."/>
            <person name="Zeng S."/>
            <person name="Gu W.-Y."/>
            <person name="Lu G."/>
            <person name="Rong L."/>
            <person name="Tian Y."/>
            <person name="Yao Z."/>
            <person name="Fu G."/>
            <person name="Chen B."/>
            <person name="Fang R."/>
            <person name="Qiang B."/>
            <person name="Chen Z."/>
            <person name="Zhao G.-P."/>
            <person name="Tang J.-L."/>
            <person name="He C."/>
        </authorList>
    </citation>
    <scope>NUCLEOTIDE SEQUENCE [LARGE SCALE GENOMIC DNA]</scope>
    <source>
        <strain>8004</strain>
    </source>
</reference>
<feature type="chain" id="PRO_0000371197" description="ATP synthase subunit delta">
    <location>
        <begin position="1"/>
        <end position="175"/>
    </location>
</feature>
<sequence length="175" mass="18359">MSQALTLARPYARAAFAIAREGGKFAPWSDALAFSAQVAGDPRVAALLLNPALHQDQAVTLLAPPAAEADYQRFLGLLADAQRLALLPEIAGLYEQLRAEAEHVVKATVTSATDMSPAELATITAALKKRFGREVDVTTAVDASLIGGAVIDTGEMVIDGSLKGKLARLQNSLAH</sequence>
<comment type="function">
    <text evidence="1">F(1)F(0) ATP synthase produces ATP from ADP in the presence of a proton or sodium gradient. F-type ATPases consist of two structural domains, F(1) containing the extramembraneous catalytic core and F(0) containing the membrane proton channel, linked together by a central stalk and a peripheral stalk. During catalysis, ATP synthesis in the catalytic domain of F(1) is coupled via a rotary mechanism of the central stalk subunits to proton translocation.</text>
</comment>
<comment type="function">
    <text evidence="1">This protein is part of the stalk that links CF(0) to CF(1). It either transmits conformational changes from CF(0) to CF(1) or is implicated in proton conduction.</text>
</comment>
<comment type="subunit">
    <text evidence="1">F-type ATPases have 2 components, F(1) - the catalytic core - and F(0) - the membrane proton channel. F(1) has five subunits: alpha(3), beta(3), gamma(1), delta(1), epsilon(1). F(0) has three main subunits: a(1), b(2) and c(10-14). The alpha and beta chains form an alternating ring which encloses part of the gamma chain. F(1) is attached to F(0) by a central stalk formed by the gamma and epsilon chains, while a peripheral stalk is formed by the delta and b chains.</text>
</comment>
<comment type="subcellular location">
    <subcellularLocation>
        <location evidence="1">Cell inner membrane</location>
        <topology evidence="1">Peripheral membrane protein</topology>
    </subcellularLocation>
</comment>
<comment type="similarity">
    <text evidence="1">Belongs to the ATPase delta chain family.</text>
</comment>
<keyword id="KW-0066">ATP synthesis</keyword>
<keyword id="KW-0997">Cell inner membrane</keyword>
<keyword id="KW-1003">Cell membrane</keyword>
<keyword id="KW-0139">CF(1)</keyword>
<keyword id="KW-0375">Hydrogen ion transport</keyword>
<keyword id="KW-0406">Ion transport</keyword>
<keyword id="KW-0472">Membrane</keyword>
<keyword id="KW-0813">Transport</keyword>
<accession>Q4UQF1</accession>
<gene>
    <name evidence="1" type="primary">atpH</name>
    <name type="ordered locus">XC_3681</name>
</gene>
<name>ATPD_XANC8</name>
<dbReference type="EMBL" id="CP000050">
    <property type="protein sequence ID" value="AAY50722.1"/>
    <property type="molecule type" value="Genomic_DNA"/>
</dbReference>
<dbReference type="RefSeq" id="WP_011035798.1">
    <property type="nucleotide sequence ID" value="NZ_CP155948.1"/>
</dbReference>
<dbReference type="SMR" id="Q4UQF1"/>
<dbReference type="KEGG" id="xcb:XC_3681"/>
<dbReference type="HOGENOM" id="CLU_085114_3_0_6"/>
<dbReference type="Proteomes" id="UP000000420">
    <property type="component" value="Chromosome"/>
</dbReference>
<dbReference type="GO" id="GO:0005886">
    <property type="term" value="C:plasma membrane"/>
    <property type="evidence" value="ECO:0007669"/>
    <property type="project" value="UniProtKB-SubCell"/>
</dbReference>
<dbReference type="GO" id="GO:0045259">
    <property type="term" value="C:proton-transporting ATP synthase complex"/>
    <property type="evidence" value="ECO:0007669"/>
    <property type="project" value="UniProtKB-KW"/>
</dbReference>
<dbReference type="GO" id="GO:0046933">
    <property type="term" value="F:proton-transporting ATP synthase activity, rotational mechanism"/>
    <property type="evidence" value="ECO:0007669"/>
    <property type="project" value="UniProtKB-UniRule"/>
</dbReference>
<dbReference type="Gene3D" id="1.10.520.20">
    <property type="entry name" value="N-terminal domain of the delta subunit of the F1F0-ATP synthase"/>
    <property type="match status" value="1"/>
</dbReference>
<dbReference type="HAMAP" id="MF_01416">
    <property type="entry name" value="ATP_synth_delta_bact"/>
    <property type="match status" value="1"/>
</dbReference>
<dbReference type="InterPro" id="IPR026015">
    <property type="entry name" value="ATP_synth_OSCP/delta_N_sf"/>
</dbReference>
<dbReference type="InterPro" id="IPR000711">
    <property type="entry name" value="ATPase_OSCP/dsu"/>
</dbReference>
<dbReference type="NCBIfam" id="TIGR01145">
    <property type="entry name" value="ATP_synt_delta"/>
    <property type="match status" value="1"/>
</dbReference>
<dbReference type="NCBIfam" id="NF004402">
    <property type="entry name" value="PRK05758.2-2"/>
    <property type="match status" value="1"/>
</dbReference>
<dbReference type="PANTHER" id="PTHR11910">
    <property type="entry name" value="ATP SYNTHASE DELTA CHAIN"/>
    <property type="match status" value="1"/>
</dbReference>
<dbReference type="Pfam" id="PF00213">
    <property type="entry name" value="OSCP"/>
    <property type="match status" value="1"/>
</dbReference>
<dbReference type="PRINTS" id="PR00125">
    <property type="entry name" value="ATPASEDELTA"/>
</dbReference>
<dbReference type="SUPFAM" id="SSF47928">
    <property type="entry name" value="N-terminal domain of the delta subunit of the F1F0-ATP synthase"/>
    <property type="match status" value="1"/>
</dbReference>
<evidence type="ECO:0000255" key="1">
    <source>
        <dbReference type="HAMAP-Rule" id="MF_01416"/>
    </source>
</evidence>
<organism>
    <name type="scientific">Xanthomonas campestris pv. campestris (strain 8004)</name>
    <dbReference type="NCBI Taxonomy" id="314565"/>
    <lineage>
        <taxon>Bacteria</taxon>
        <taxon>Pseudomonadati</taxon>
        <taxon>Pseudomonadota</taxon>
        <taxon>Gammaproteobacteria</taxon>
        <taxon>Lysobacterales</taxon>
        <taxon>Lysobacteraceae</taxon>
        <taxon>Xanthomonas</taxon>
    </lineage>
</organism>